<keyword id="KW-0052">Apoplast</keyword>
<keyword id="KW-0134">Cell wall</keyword>
<keyword id="KW-0961">Cell wall biogenesis/degradation</keyword>
<keyword id="KW-1015">Disulfide bond</keyword>
<keyword id="KW-0325">Glycoprotein</keyword>
<keyword id="KW-0326">Glycosidase</keyword>
<keyword id="KW-0378">Hydrolase</keyword>
<keyword id="KW-1185">Reference proteome</keyword>
<keyword id="KW-0964">Secreted</keyword>
<keyword id="KW-0732">Signal</keyword>
<keyword id="KW-0808">Transferase</keyword>
<gene>
    <name type="primary">XTH22</name>
    <name type="synonym">TCH4</name>
    <name type="ordered locus">At5g57560</name>
    <name type="ORF">MUA2.13</name>
</gene>
<sequence length="284" mass="32093">MAITYLLPLFLSLIITSSVSANFQRDVEITWGDGRGQIKNNGELLTLSLDKSSGSGFQSKNEYLFGKVSMQMKLVPGNSAGTVTTLYLKSPGTTWDEIDFEFLGNSSGEPYTLHTNVYTQGKGDKEQQFKLWFDPTANFHTYTILWNPQRIIFTVDGTPIREFKNMESLGTLFPKNKPMRMYSSLWNADDWATRGGLVKTDWSKAPFTASYRGFQQEACVWSNGKSSCPNASKQGTTTGSWLSQELDSTAQQRMRWVQRNYMIYNYCTDAKRFPQGLPKECLAA</sequence>
<name>XTH22_ARATH</name>
<dbReference type="EC" id="2.4.1.207"/>
<dbReference type="EMBL" id="U27609">
    <property type="protein sequence ID" value="AAA92363.1"/>
    <property type="molecule type" value="Genomic_DNA"/>
</dbReference>
<dbReference type="EMBL" id="AF051338">
    <property type="protein sequence ID" value="AAC05572.1"/>
    <property type="molecule type" value="mRNA"/>
</dbReference>
<dbReference type="EMBL" id="AB011482">
    <property type="protein sequence ID" value="BAB08791.1"/>
    <property type="molecule type" value="Genomic_DNA"/>
</dbReference>
<dbReference type="EMBL" id="CP002688">
    <property type="protein sequence ID" value="AED96915.1"/>
    <property type="molecule type" value="Genomic_DNA"/>
</dbReference>
<dbReference type="EMBL" id="AF367262">
    <property type="protein sequence ID" value="AAK56251.1"/>
    <property type="molecule type" value="mRNA"/>
</dbReference>
<dbReference type="EMBL" id="AF446881">
    <property type="protein sequence ID" value="AAL38614.1"/>
    <property type="molecule type" value="mRNA"/>
</dbReference>
<dbReference type="EMBL" id="AY052712">
    <property type="protein sequence ID" value="AAK96616.1"/>
    <property type="molecule type" value="mRNA"/>
</dbReference>
<dbReference type="EMBL" id="AY055102">
    <property type="protein sequence ID" value="AAL05902.1"/>
    <property type="molecule type" value="mRNA"/>
</dbReference>
<dbReference type="EMBL" id="AF083792">
    <property type="protein sequence ID" value="AAN60350.1"/>
    <property type="molecule type" value="mRNA"/>
</dbReference>
<dbReference type="PIR" id="T52097">
    <property type="entry name" value="T52097"/>
</dbReference>
<dbReference type="RefSeq" id="NP_200564.1">
    <property type="nucleotide sequence ID" value="NM_125137.4"/>
</dbReference>
<dbReference type="SMR" id="Q38857"/>
<dbReference type="BioGRID" id="21104">
    <property type="interactions" value="4"/>
</dbReference>
<dbReference type="FunCoup" id="Q38857">
    <property type="interactions" value="347"/>
</dbReference>
<dbReference type="STRING" id="3702.Q38857"/>
<dbReference type="CAZy" id="GH16">
    <property type="family name" value="Glycoside Hydrolase Family 16"/>
</dbReference>
<dbReference type="GlyCosmos" id="Q38857">
    <property type="glycosylation" value="2 sites, No reported glycans"/>
</dbReference>
<dbReference type="GlyGen" id="Q38857">
    <property type="glycosylation" value="2 sites"/>
</dbReference>
<dbReference type="PaxDb" id="3702-AT5G57560.1"/>
<dbReference type="ProteomicsDB" id="242791"/>
<dbReference type="EnsemblPlants" id="AT5G57560.1">
    <property type="protein sequence ID" value="AT5G57560.1"/>
    <property type="gene ID" value="AT5G57560"/>
</dbReference>
<dbReference type="GeneID" id="835860"/>
<dbReference type="Gramene" id="AT5G57560.1">
    <property type="protein sequence ID" value="AT5G57560.1"/>
    <property type="gene ID" value="AT5G57560"/>
</dbReference>
<dbReference type="KEGG" id="ath:AT5G57560"/>
<dbReference type="Araport" id="AT5G57560"/>
<dbReference type="TAIR" id="AT5G57560">
    <property type="gene designation" value="TCH4"/>
</dbReference>
<dbReference type="eggNOG" id="ENOG502QQ71">
    <property type="taxonomic scope" value="Eukaryota"/>
</dbReference>
<dbReference type="HOGENOM" id="CLU_048041_0_0_1"/>
<dbReference type="InParanoid" id="Q38857"/>
<dbReference type="OMA" id="NANACLW"/>
<dbReference type="OrthoDB" id="4781at2759"/>
<dbReference type="PhylomeDB" id="Q38857"/>
<dbReference type="BioCyc" id="ARA:AT5G57560-MONOMER"/>
<dbReference type="PRO" id="PR:Q38857"/>
<dbReference type="Proteomes" id="UP000006548">
    <property type="component" value="Chromosome 5"/>
</dbReference>
<dbReference type="ExpressionAtlas" id="Q38857">
    <property type="expression patterns" value="baseline and differential"/>
</dbReference>
<dbReference type="GO" id="GO:0048046">
    <property type="term" value="C:apoplast"/>
    <property type="evidence" value="ECO:0007669"/>
    <property type="project" value="UniProtKB-SubCell"/>
</dbReference>
<dbReference type="GO" id="GO:0005794">
    <property type="term" value="C:Golgi apparatus"/>
    <property type="evidence" value="ECO:0007005"/>
    <property type="project" value="TAIR"/>
</dbReference>
<dbReference type="GO" id="GO:0099503">
    <property type="term" value="C:secretory vesicle"/>
    <property type="evidence" value="ECO:0007005"/>
    <property type="project" value="TAIR"/>
</dbReference>
<dbReference type="GO" id="GO:0004553">
    <property type="term" value="F:hydrolase activity, hydrolyzing O-glycosyl compounds"/>
    <property type="evidence" value="ECO:0007669"/>
    <property type="project" value="InterPro"/>
</dbReference>
<dbReference type="GO" id="GO:0030247">
    <property type="term" value="F:polysaccharide binding"/>
    <property type="evidence" value="ECO:0000250"/>
    <property type="project" value="UniProtKB"/>
</dbReference>
<dbReference type="GO" id="GO:0016762">
    <property type="term" value="F:xyloglucan:xyloglucosyl transferase activity"/>
    <property type="evidence" value="ECO:0000314"/>
    <property type="project" value="TAIR"/>
</dbReference>
<dbReference type="GO" id="GO:0042546">
    <property type="term" value="P:cell wall biogenesis"/>
    <property type="evidence" value="ECO:0007669"/>
    <property type="project" value="InterPro"/>
</dbReference>
<dbReference type="GO" id="GO:0071456">
    <property type="term" value="P:cellular response to hypoxia"/>
    <property type="evidence" value="ECO:0007007"/>
    <property type="project" value="TAIR"/>
</dbReference>
<dbReference type="GO" id="GO:0009664">
    <property type="term" value="P:plant-type cell wall organization"/>
    <property type="evidence" value="ECO:0000304"/>
    <property type="project" value="TAIR"/>
</dbReference>
<dbReference type="GO" id="GO:0009733">
    <property type="term" value="P:response to auxin"/>
    <property type="evidence" value="ECO:0000270"/>
    <property type="project" value="TAIR"/>
</dbReference>
<dbReference type="GO" id="GO:0009741">
    <property type="term" value="P:response to brassinosteroid"/>
    <property type="evidence" value="ECO:0000270"/>
    <property type="project" value="TAIR"/>
</dbReference>
<dbReference type="GO" id="GO:0009409">
    <property type="term" value="P:response to cold"/>
    <property type="evidence" value="ECO:0000270"/>
    <property type="project" value="TAIR"/>
</dbReference>
<dbReference type="GO" id="GO:0009408">
    <property type="term" value="P:response to heat"/>
    <property type="evidence" value="ECO:0000270"/>
    <property type="project" value="TAIR"/>
</dbReference>
<dbReference type="GO" id="GO:0009612">
    <property type="term" value="P:response to mechanical stimulus"/>
    <property type="evidence" value="ECO:0000270"/>
    <property type="project" value="TAIR"/>
</dbReference>
<dbReference type="GO" id="GO:0010411">
    <property type="term" value="P:xyloglucan metabolic process"/>
    <property type="evidence" value="ECO:0007669"/>
    <property type="project" value="InterPro"/>
</dbReference>
<dbReference type="CDD" id="cd02176">
    <property type="entry name" value="GH16_XET"/>
    <property type="match status" value="1"/>
</dbReference>
<dbReference type="FunFam" id="2.60.120.200:FF:000025">
    <property type="entry name" value="Xyloglucan endotransglucosylase/hydrolase"/>
    <property type="match status" value="1"/>
</dbReference>
<dbReference type="Gene3D" id="2.60.120.200">
    <property type="match status" value="1"/>
</dbReference>
<dbReference type="InterPro" id="IPR044791">
    <property type="entry name" value="Beta-glucanase/XTH"/>
</dbReference>
<dbReference type="InterPro" id="IPR008264">
    <property type="entry name" value="Beta_glucanase"/>
</dbReference>
<dbReference type="InterPro" id="IPR013320">
    <property type="entry name" value="ConA-like_dom_sf"/>
</dbReference>
<dbReference type="InterPro" id="IPR000757">
    <property type="entry name" value="GH16"/>
</dbReference>
<dbReference type="InterPro" id="IPR008263">
    <property type="entry name" value="GH16_AS"/>
</dbReference>
<dbReference type="InterPro" id="IPR010713">
    <property type="entry name" value="XET_C"/>
</dbReference>
<dbReference type="InterPro" id="IPR016455">
    <property type="entry name" value="XTH"/>
</dbReference>
<dbReference type="PANTHER" id="PTHR31062">
    <property type="entry name" value="XYLOGLUCAN ENDOTRANSGLUCOSYLASE/HYDROLASE PROTEIN 8-RELATED"/>
    <property type="match status" value="1"/>
</dbReference>
<dbReference type="Pfam" id="PF00722">
    <property type="entry name" value="Glyco_hydro_16"/>
    <property type="match status" value="1"/>
</dbReference>
<dbReference type="Pfam" id="PF06955">
    <property type="entry name" value="XET_C"/>
    <property type="match status" value="1"/>
</dbReference>
<dbReference type="PIRSF" id="PIRSF005604">
    <property type="entry name" value="XET"/>
    <property type="match status" value="1"/>
</dbReference>
<dbReference type="PRINTS" id="PR00737">
    <property type="entry name" value="GLHYDRLASE16"/>
</dbReference>
<dbReference type="SUPFAM" id="SSF49899">
    <property type="entry name" value="Concanavalin A-like lectins/glucanases"/>
    <property type="match status" value="1"/>
</dbReference>
<dbReference type="PROSITE" id="PS01034">
    <property type="entry name" value="GH16_1"/>
    <property type="match status" value="1"/>
</dbReference>
<dbReference type="PROSITE" id="PS51762">
    <property type="entry name" value="GH16_2"/>
    <property type="match status" value="1"/>
</dbReference>
<organism>
    <name type="scientific">Arabidopsis thaliana</name>
    <name type="common">Mouse-ear cress</name>
    <dbReference type="NCBI Taxonomy" id="3702"/>
    <lineage>
        <taxon>Eukaryota</taxon>
        <taxon>Viridiplantae</taxon>
        <taxon>Streptophyta</taxon>
        <taxon>Embryophyta</taxon>
        <taxon>Tracheophyta</taxon>
        <taxon>Spermatophyta</taxon>
        <taxon>Magnoliopsida</taxon>
        <taxon>eudicotyledons</taxon>
        <taxon>Gunneridae</taxon>
        <taxon>Pentapetalae</taxon>
        <taxon>rosids</taxon>
        <taxon>malvids</taxon>
        <taxon>Brassicales</taxon>
        <taxon>Brassicaceae</taxon>
        <taxon>Camelineae</taxon>
        <taxon>Arabidopsis</taxon>
    </lineage>
</organism>
<protein>
    <recommendedName>
        <fullName>Xyloglucan endotransglucosylase/hydrolase protein 22</fullName>
        <shortName>At-XTH22</shortName>
        <shortName>XTH-22</shortName>
        <ecNumber>2.4.1.207</ecNumber>
    </recommendedName>
    <alternativeName>
        <fullName>Touch protein 4</fullName>
    </alternativeName>
</protein>
<comment type="function">
    <text evidence="7">Catalyzes xyloglucan endohydrolysis (XEH) and/or endotransglycosylation (XET). Cleaves and religates xyloglucan polymers, an essential constituent of the primary cell wall, and thereby participates in cell wall construction of growing tissues. Its induction in case of mechanical stress, suggests that it may contribute in the adaptive changes in morphogenesis by being recruited to alter tissues tensil strength, or flexibility, enabling adaptation to mechanically stressful environments.</text>
</comment>
<comment type="catalytic activity">
    <reaction evidence="5">
        <text>breaks a beta-(1-&gt;4) bond in the backbone of a xyloglucan and transfers the xyloglucanyl segment on to O-4 of the non-reducing terminal glucose residue of an acceptor, which can be a xyloglucan or an oligosaccharide of xyloglucan.</text>
        <dbReference type="EC" id="2.4.1.207"/>
    </reaction>
</comment>
<comment type="biophysicochemical properties">
    <phDependence>
        <text>Optimum pH is 6.0-6.5.</text>
    </phDependence>
    <temperatureDependence>
        <text>Optimum temperature from 12 to 18 degrees Celsius. Cold tolerant.</text>
    </temperatureDependence>
</comment>
<comment type="subcellular location">
    <subcellularLocation>
        <location evidence="11">Secreted</location>
        <location evidence="11">Cell wall</location>
    </subcellularLocation>
    <subcellularLocation>
        <location evidence="11">Secreted</location>
        <location evidence="11">Extracellular space</location>
        <location evidence="11">Apoplast</location>
    </subcellularLocation>
</comment>
<comment type="tissue specificity">
    <text evidence="6 7 9">Highly expressed. Predominantly expressed in green siliques. Expressed in young expanding leaves, trichomes, lateral root primordia, vascular tissue, abscission zones and elongating hypocols. Following wind stimulation, it decreases in the leaves of wind-stimulated plants, while it strongly increases in sites around cells of the pith parenchyma, between the vascular elements, and within the epidermis.</text>
</comment>
<comment type="induction">
    <text evidence="6 7 8">In response to mechanical perturbations such as wind or touch. Induced by auxin and brassinolide.</text>
</comment>
<comment type="PTM">
    <text>Contains at least one intrachain disulfide bond essential for its enzymatic activity.</text>
</comment>
<comment type="PTM">
    <text evidence="5 10">N-glycosylated; essential for its enzymatic activity.</text>
</comment>
<comment type="similarity">
    <text evidence="11">Belongs to the glycosyl hydrolase 16 family. XTH group 2 subfamily.</text>
</comment>
<feature type="signal peptide" evidence="2">
    <location>
        <begin position="1"/>
        <end position="21"/>
    </location>
</feature>
<feature type="chain" id="PRO_0000011822" description="Xyloglucan endotransglucosylase/hydrolase protein 22">
    <location>
        <begin position="22"/>
        <end position="284"/>
    </location>
</feature>
<feature type="domain" description="GH16" evidence="3">
    <location>
        <begin position="22"/>
        <end position="211"/>
    </location>
</feature>
<feature type="active site" description="Nucleophile" evidence="4">
    <location>
        <position position="97"/>
    </location>
</feature>
<feature type="active site" description="Proton donor" evidence="4">
    <location>
        <position position="101"/>
    </location>
</feature>
<feature type="binding site" evidence="1">
    <location>
        <position position="101"/>
    </location>
    <ligand>
        <name>xyloglucan</name>
        <dbReference type="ChEBI" id="CHEBI:18233"/>
    </ligand>
</feature>
<feature type="binding site" evidence="1">
    <location>
        <begin position="114"/>
        <end position="116"/>
    </location>
    <ligand>
        <name>xyloglucan</name>
        <dbReference type="ChEBI" id="CHEBI:18233"/>
    </ligand>
</feature>
<feature type="binding site" evidence="1">
    <location>
        <begin position="124"/>
        <end position="126"/>
    </location>
    <ligand>
        <name>xyloglucan</name>
        <dbReference type="ChEBI" id="CHEBI:18233"/>
    </ligand>
</feature>
<feature type="binding site" evidence="1">
    <location>
        <begin position="190"/>
        <end position="191"/>
    </location>
    <ligand>
        <name>xyloglucan</name>
        <dbReference type="ChEBI" id="CHEBI:18233"/>
    </ligand>
</feature>
<feature type="binding site" evidence="1">
    <location>
        <position position="195"/>
    </location>
    <ligand>
        <name>xyloglucan</name>
        <dbReference type="ChEBI" id="CHEBI:18233"/>
    </ligand>
</feature>
<feature type="binding site" evidence="1">
    <location>
        <position position="272"/>
    </location>
    <ligand>
        <name>xyloglucan</name>
        <dbReference type="ChEBI" id="CHEBI:18233"/>
    </ligand>
</feature>
<feature type="site" description="Important for catalytic activity" evidence="1">
    <location>
        <position position="99"/>
    </location>
</feature>
<feature type="glycosylation site" description="N-linked (GlcNAc...) asparagine" evidence="2">
    <location>
        <position position="105"/>
    </location>
</feature>
<feature type="glycosylation site" description="N-linked (GlcNAc...) asparagine" evidence="2">
    <location>
        <position position="230"/>
    </location>
</feature>
<feature type="disulfide bond" evidence="1">
    <location>
        <begin position="219"/>
        <end position="228"/>
    </location>
</feature>
<feature type="disulfide bond" evidence="1">
    <location>
        <begin position="267"/>
        <end position="281"/>
    </location>
</feature>
<feature type="mutagenesis site" description="Induces mislocalization." evidence="10">
    <original>E</original>
    <variation>D</variation>
    <location>
        <position position="97"/>
    </location>
</feature>
<feature type="mutagenesis site" description="Loss of function." evidence="10">
    <original>E</original>
    <variation>Q</variation>
    <location>
        <position position="97"/>
    </location>
</feature>
<reference key="1">
    <citation type="journal article" date="1995" name="Plant Cell">
        <title>Arabidopsis TCH4, regulated by hormones and the environment, encodes a xyloglucan endotransglycosylase.</title>
        <authorList>
            <person name="Xu W."/>
            <person name="Purugganan M.M."/>
            <person name="Polisensky D.H."/>
            <person name="Antosiewicz D.M."/>
            <person name="Fry S.C."/>
            <person name="Braam J."/>
        </authorList>
    </citation>
    <scope>NUCLEOTIDE SEQUENCE [GENOMIC DNA]</scope>
    <scope>FUNCTION</scope>
    <scope>TISSUE SPECIFICITY</scope>
    <scope>INDUCTION</scope>
    <source>
        <strain>cv. Columbia</strain>
    </source>
</reference>
<reference key="2">
    <citation type="journal article" date="1996" name="Plant J.">
        <title>The Arabidopsis XET-related gene family: environmental and hormonal regulation of expression.</title>
        <authorList>
            <person name="Xu W."/>
            <person name="Campbell P."/>
            <person name="Vargheese A.K."/>
            <person name="Braam J."/>
        </authorList>
    </citation>
    <scope>NUCLEOTIDE SEQUENCE [MRNA]</scope>
    <scope>INDUCTION</scope>
    <source>
        <strain>cv. Columbia</strain>
    </source>
</reference>
<reference key="3">
    <citation type="journal article" date="1998" name="DNA Res.">
        <title>Structural analysis of Arabidopsis thaliana chromosome 5. V. Sequence features of the regions of 1,381,565 bp covered by twenty one physically assigned P1 and TAC clones.</title>
        <authorList>
            <person name="Kaneko T."/>
            <person name="Kotani H."/>
            <person name="Nakamura Y."/>
            <person name="Sato S."/>
            <person name="Asamizu E."/>
            <person name="Miyajima N."/>
            <person name="Tabata S."/>
        </authorList>
    </citation>
    <scope>NUCLEOTIDE SEQUENCE [LARGE SCALE GENOMIC DNA]</scope>
    <source>
        <strain>cv. Columbia</strain>
    </source>
</reference>
<reference key="4">
    <citation type="journal article" date="2017" name="Plant J.">
        <title>Araport11: a complete reannotation of the Arabidopsis thaliana reference genome.</title>
        <authorList>
            <person name="Cheng C.Y."/>
            <person name="Krishnakumar V."/>
            <person name="Chan A.P."/>
            <person name="Thibaud-Nissen F."/>
            <person name="Schobel S."/>
            <person name="Town C.D."/>
        </authorList>
    </citation>
    <scope>GENOME REANNOTATION</scope>
    <source>
        <strain>cv. Columbia</strain>
    </source>
</reference>
<reference key="5">
    <citation type="journal article" date="2003" name="Science">
        <title>Empirical analysis of transcriptional activity in the Arabidopsis genome.</title>
        <authorList>
            <person name="Yamada K."/>
            <person name="Lim J."/>
            <person name="Dale J.M."/>
            <person name="Chen H."/>
            <person name="Shinn P."/>
            <person name="Palm C.J."/>
            <person name="Southwick A.M."/>
            <person name="Wu H.C."/>
            <person name="Kim C.J."/>
            <person name="Nguyen M."/>
            <person name="Pham P.K."/>
            <person name="Cheuk R.F."/>
            <person name="Karlin-Newmann G."/>
            <person name="Liu S.X."/>
            <person name="Lam B."/>
            <person name="Sakano H."/>
            <person name="Wu T."/>
            <person name="Yu G."/>
            <person name="Miranda M."/>
            <person name="Quach H.L."/>
            <person name="Tripp M."/>
            <person name="Chang C.H."/>
            <person name="Lee J.M."/>
            <person name="Toriumi M.J."/>
            <person name="Chan M.M."/>
            <person name="Tang C.C."/>
            <person name="Onodera C.S."/>
            <person name="Deng J.M."/>
            <person name="Akiyama K."/>
            <person name="Ansari Y."/>
            <person name="Arakawa T."/>
            <person name="Banh J."/>
            <person name="Banno F."/>
            <person name="Bowser L."/>
            <person name="Brooks S.Y."/>
            <person name="Carninci P."/>
            <person name="Chao Q."/>
            <person name="Choy N."/>
            <person name="Enju A."/>
            <person name="Goldsmith A.D."/>
            <person name="Gurjal M."/>
            <person name="Hansen N.F."/>
            <person name="Hayashizaki Y."/>
            <person name="Johnson-Hopson C."/>
            <person name="Hsuan V.W."/>
            <person name="Iida K."/>
            <person name="Karnes M."/>
            <person name="Khan S."/>
            <person name="Koesema E."/>
            <person name="Ishida J."/>
            <person name="Jiang P.X."/>
            <person name="Jones T."/>
            <person name="Kawai J."/>
            <person name="Kamiya A."/>
            <person name="Meyers C."/>
            <person name="Nakajima M."/>
            <person name="Narusaka M."/>
            <person name="Seki M."/>
            <person name="Sakurai T."/>
            <person name="Satou M."/>
            <person name="Tamse R."/>
            <person name="Vaysberg M."/>
            <person name="Wallender E.K."/>
            <person name="Wong C."/>
            <person name="Yamamura Y."/>
            <person name="Yuan S."/>
            <person name="Shinozaki K."/>
            <person name="Davis R.W."/>
            <person name="Theologis A."/>
            <person name="Ecker J.R."/>
        </authorList>
    </citation>
    <scope>NUCLEOTIDE SEQUENCE [LARGE SCALE MRNA]</scope>
    <source>
        <strain>cv. Columbia</strain>
    </source>
</reference>
<reference key="6">
    <citation type="submission" date="1998-08" db="EMBL/GenBank/DDBJ databases">
        <title>Signal peptide selection derived cDNAs from Arabidopsis thaliana leaves and guard cells.</title>
        <authorList>
            <person name="Stracke R."/>
            <person name="Palme K."/>
        </authorList>
    </citation>
    <scope>NUCLEOTIDE SEQUENCE [LARGE SCALE MRNA] OF 1-121</scope>
</reference>
<reference key="7">
    <citation type="journal article" date="1997" name="Plant Physiol.">
        <title>The Arabidopsis TCH4 xyloglucan endotransglycosylase. Substrate specificity, pH optimum, and cold tolerance.</title>
        <authorList>
            <person name="Purugganan M.M."/>
            <person name="Braam J."/>
            <person name="Fry S.C."/>
        </authorList>
    </citation>
    <scope>ACTIVITY REGULATION</scope>
</reference>
<reference key="8">
    <citation type="journal article" date="1997" name="Plant Physiol.">
        <title>Cellular localization of Arabidopsis xyloglucan endotransglycosylase-related proteins during development and after wind stimulation.</title>
        <authorList>
            <person name="Antosiewicz D.M."/>
            <person name="Purugganan M.M."/>
            <person name="Polisensky D.H."/>
            <person name="Braam J."/>
        </authorList>
    </citation>
    <scope>TISSUE SPECIFICITY</scope>
</reference>
<reference key="9">
    <citation type="journal article" date="1998" name="Plant J.">
        <title>Co- and/or post-translational modifications are critical for TCH4 XET activity.</title>
        <authorList>
            <person name="Campbell P."/>
            <person name="Braam J."/>
        </authorList>
    </citation>
    <scope>GLYCOSYLATION</scope>
    <scope>DISULFIDE BOND</scope>
    <scope>MUTAGENESIS OF GLU-97</scope>
</reference>
<reference key="10">
    <citation type="journal article" date="1999" name="Plant J.">
        <title>In vitro activities of four xyloglucan endotransglycosylases from Arabidopsis.</title>
        <authorList>
            <person name="Campbell P."/>
            <person name="Braam J."/>
        </authorList>
    </citation>
    <scope>ENZYME ACTIVITY</scope>
    <scope>GLYCOSYLATION</scope>
</reference>
<reference key="11">
    <citation type="journal article" date="2001" name="Plant Cell Physiol.">
        <title>A comprehensive expression analysis of all members of a gene family encoding cell-wall enzymes allowed us to predict cis-regulatory regions involved in cell-wall construction in specific organs of Arabidopsis.</title>
        <authorList>
            <person name="Yokoyama R."/>
            <person name="Nishitani K."/>
        </authorList>
    </citation>
    <scope>TISSUE SPECIFICITY</scope>
    <scope>INDUCTION</scope>
</reference>
<reference key="12">
    <citation type="journal article" date="2002" name="Plant Cell Physiol.">
        <title>The XTH family of enzymes involved in xyloglucan endotransglucosylation and endohydrolysis: current perspectives and a new unifying nomenclature.</title>
        <authorList>
            <person name="Rose J.K.C."/>
            <person name="Braam J."/>
            <person name="Fry S.C."/>
            <person name="Nishitani K."/>
        </authorList>
    </citation>
    <scope>NOMENCLATURE</scope>
</reference>
<accession>Q38857</accession>
<accession>Q8H783</accession>
<evidence type="ECO:0000250" key="1">
    <source>
        <dbReference type="UniProtKB" id="Q8GZD5"/>
    </source>
</evidence>
<evidence type="ECO:0000255" key="2"/>
<evidence type="ECO:0000255" key="3">
    <source>
        <dbReference type="PROSITE-ProRule" id="PRU01098"/>
    </source>
</evidence>
<evidence type="ECO:0000255" key="4">
    <source>
        <dbReference type="PROSITE-ProRule" id="PRU10064"/>
    </source>
</evidence>
<evidence type="ECO:0000269" key="5">
    <source>
    </source>
</evidence>
<evidence type="ECO:0000269" key="6">
    <source>
    </source>
</evidence>
<evidence type="ECO:0000269" key="7">
    <source>
    </source>
</evidence>
<evidence type="ECO:0000269" key="8">
    <source>
    </source>
</evidence>
<evidence type="ECO:0000269" key="9">
    <source>
    </source>
</evidence>
<evidence type="ECO:0000269" key="10">
    <source>
    </source>
</evidence>
<evidence type="ECO:0000305" key="11"/>
<proteinExistence type="evidence at protein level"/>